<reference key="1">
    <citation type="journal article" date="2004" name="Proc. Natl. Acad. Sci. U.S.A.">
        <title>Complete genomes of two clinical Staphylococcus aureus strains: evidence for the rapid evolution of virulence and drug resistance.</title>
        <authorList>
            <person name="Holden M.T.G."/>
            <person name="Feil E.J."/>
            <person name="Lindsay J.A."/>
            <person name="Peacock S.J."/>
            <person name="Day N.P.J."/>
            <person name="Enright M.C."/>
            <person name="Foster T.J."/>
            <person name="Moore C.E."/>
            <person name="Hurst L."/>
            <person name="Atkin R."/>
            <person name="Barron A."/>
            <person name="Bason N."/>
            <person name="Bentley S.D."/>
            <person name="Chillingworth C."/>
            <person name="Chillingworth T."/>
            <person name="Churcher C."/>
            <person name="Clark L."/>
            <person name="Corton C."/>
            <person name="Cronin A."/>
            <person name="Doggett J."/>
            <person name="Dowd L."/>
            <person name="Feltwell T."/>
            <person name="Hance Z."/>
            <person name="Harris B."/>
            <person name="Hauser H."/>
            <person name="Holroyd S."/>
            <person name="Jagels K."/>
            <person name="James K.D."/>
            <person name="Lennard N."/>
            <person name="Line A."/>
            <person name="Mayes R."/>
            <person name="Moule S."/>
            <person name="Mungall K."/>
            <person name="Ormond D."/>
            <person name="Quail M.A."/>
            <person name="Rabbinowitsch E."/>
            <person name="Rutherford K.M."/>
            <person name="Sanders M."/>
            <person name="Sharp S."/>
            <person name="Simmonds M."/>
            <person name="Stevens K."/>
            <person name="Whitehead S."/>
            <person name="Barrell B.G."/>
            <person name="Spratt B.G."/>
            <person name="Parkhill J."/>
        </authorList>
    </citation>
    <scope>NUCLEOTIDE SEQUENCE [LARGE SCALE GENOMIC DNA]</scope>
    <source>
        <strain>MSSA476</strain>
    </source>
</reference>
<feature type="chain" id="PRO_0000178377" description="Small ribosomal subunit protein bS21">
    <location>
        <begin position="1"/>
        <end position="58"/>
    </location>
</feature>
<protein>
    <recommendedName>
        <fullName evidence="1">Small ribosomal subunit protein bS21</fullName>
    </recommendedName>
    <alternativeName>
        <fullName evidence="2">30S ribosomal protein S21</fullName>
    </alternativeName>
</protein>
<organism>
    <name type="scientific">Staphylococcus aureus (strain MSSA476)</name>
    <dbReference type="NCBI Taxonomy" id="282459"/>
    <lineage>
        <taxon>Bacteria</taxon>
        <taxon>Bacillati</taxon>
        <taxon>Bacillota</taxon>
        <taxon>Bacilli</taxon>
        <taxon>Bacillales</taxon>
        <taxon>Staphylococcaceae</taxon>
        <taxon>Staphylococcus</taxon>
    </lineage>
</organism>
<proteinExistence type="inferred from homology"/>
<keyword id="KW-0687">Ribonucleoprotein</keyword>
<keyword id="KW-0689">Ribosomal protein</keyword>
<comment type="similarity">
    <text evidence="1">Belongs to the bacterial ribosomal protein bS21 family.</text>
</comment>
<dbReference type="EMBL" id="BX571857">
    <property type="protein sequence ID" value="CAG43314.1"/>
    <property type="molecule type" value="Genomic_DNA"/>
</dbReference>
<dbReference type="RefSeq" id="WP_000048060.1">
    <property type="nucleotide sequence ID" value="NC_002953.3"/>
</dbReference>
<dbReference type="SMR" id="Q6G8Z2"/>
<dbReference type="GeneID" id="98345946"/>
<dbReference type="KEGG" id="sas:SAS1513"/>
<dbReference type="HOGENOM" id="CLU_159258_3_2_9"/>
<dbReference type="GO" id="GO:1990904">
    <property type="term" value="C:ribonucleoprotein complex"/>
    <property type="evidence" value="ECO:0007669"/>
    <property type="project" value="UniProtKB-KW"/>
</dbReference>
<dbReference type="GO" id="GO:0005840">
    <property type="term" value="C:ribosome"/>
    <property type="evidence" value="ECO:0007669"/>
    <property type="project" value="UniProtKB-KW"/>
</dbReference>
<dbReference type="GO" id="GO:0003735">
    <property type="term" value="F:structural constituent of ribosome"/>
    <property type="evidence" value="ECO:0007669"/>
    <property type="project" value="InterPro"/>
</dbReference>
<dbReference type="GO" id="GO:0006412">
    <property type="term" value="P:translation"/>
    <property type="evidence" value="ECO:0007669"/>
    <property type="project" value="UniProtKB-UniRule"/>
</dbReference>
<dbReference type="Gene3D" id="1.20.5.1150">
    <property type="entry name" value="Ribosomal protein S8"/>
    <property type="match status" value="1"/>
</dbReference>
<dbReference type="HAMAP" id="MF_00358">
    <property type="entry name" value="Ribosomal_bS21"/>
    <property type="match status" value="1"/>
</dbReference>
<dbReference type="InterPro" id="IPR001911">
    <property type="entry name" value="Ribosomal_bS21"/>
</dbReference>
<dbReference type="InterPro" id="IPR018278">
    <property type="entry name" value="Ribosomal_bS21_CS"/>
</dbReference>
<dbReference type="InterPro" id="IPR038380">
    <property type="entry name" value="Ribosomal_bS21_sf"/>
</dbReference>
<dbReference type="NCBIfam" id="TIGR00030">
    <property type="entry name" value="S21p"/>
    <property type="match status" value="1"/>
</dbReference>
<dbReference type="PANTHER" id="PTHR21109">
    <property type="entry name" value="MITOCHONDRIAL 28S RIBOSOMAL PROTEIN S21"/>
    <property type="match status" value="1"/>
</dbReference>
<dbReference type="PANTHER" id="PTHR21109:SF22">
    <property type="entry name" value="SMALL RIBOSOMAL SUBUNIT PROTEIN BS21"/>
    <property type="match status" value="1"/>
</dbReference>
<dbReference type="Pfam" id="PF01165">
    <property type="entry name" value="Ribosomal_S21"/>
    <property type="match status" value="1"/>
</dbReference>
<dbReference type="PRINTS" id="PR00976">
    <property type="entry name" value="RIBOSOMALS21"/>
</dbReference>
<dbReference type="PROSITE" id="PS01181">
    <property type="entry name" value="RIBOSOMAL_S21"/>
    <property type="match status" value="1"/>
</dbReference>
<sequence length="58" mass="6972">MSKTVVRKNESLEDALRRFKRSVSKSGTIQEVRKREFYEKPSVKRKKKSEAARKRKFK</sequence>
<gene>
    <name evidence="1" type="primary">rpsU</name>
    <name type="ordered locus">SAS1513</name>
</gene>
<name>RS21_STAAS</name>
<accession>Q6G8Z2</accession>
<evidence type="ECO:0000255" key="1">
    <source>
        <dbReference type="HAMAP-Rule" id="MF_00358"/>
    </source>
</evidence>
<evidence type="ECO:0000305" key="2"/>